<reference key="1">
    <citation type="journal article" date="2007" name="Proc. Natl. Acad. Sci. U.S.A.">
        <title>The genome of Syntrophus aciditrophicus: life at the thermodynamic limit of microbial growth.</title>
        <authorList>
            <person name="McInerney M.J."/>
            <person name="Rohlin L."/>
            <person name="Mouttaki H."/>
            <person name="Kim U."/>
            <person name="Krupp R.S."/>
            <person name="Rios-Hernandez L."/>
            <person name="Sieber J."/>
            <person name="Struchtemeyer C.G."/>
            <person name="Bhattacharyya A."/>
            <person name="Campbell J.W."/>
            <person name="Gunsalus R.P."/>
        </authorList>
    </citation>
    <scope>NUCLEOTIDE SEQUENCE [LARGE SCALE GENOMIC DNA]</scope>
    <source>
        <strain>SB</strain>
    </source>
</reference>
<proteinExistence type="inferred from homology"/>
<organism>
    <name type="scientific">Syntrophus aciditrophicus (strain SB)</name>
    <dbReference type="NCBI Taxonomy" id="56780"/>
    <lineage>
        <taxon>Bacteria</taxon>
        <taxon>Pseudomonadati</taxon>
        <taxon>Thermodesulfobacteriota</taxon>
        <taxon>Syntrophia</taxon>
        <taxon>Syntrophales</taxon>
        <taxon>Syntrophaceae</taxon>
        <taxon>Syntrophus</taxon>
    </lineage>
</organism>
<evidence type="ECO:0000255" key="1">
    <source>
        <dbReference type="HAMAP-Rule" id="MF_00531"/>
    </source>
</evidence>
<evidence type="ECO:0000305" key="2"/>
<sequence>MARSIKKGPFVDEKLFDKVQKAVASGNKSVIKTWSRRSTITPDLIGHTFAVHNGKKFIPVFVTENMVGHKLGEFAPTRIFFSHAGDRKSKVRK</sequence>
<feature type="chain" id="PRO_0000265456" description="Small ribosomal subunit protein uS19">
    <location>
        <begin position="1"/>
        <end position="93"/>
    </location>
</feature>
<keyword id="KW-1185">Reference proteome</keyword>
<keyword id="KW-0687">Ribonucleoprotein</keyword>
<keyword id="KW-0689">Ribosomal protein</keyword>
<keyword id="KW-0694">RNA-binding</keyword>
<keyword id="KW-0699">rRNA-binding</keyword>
<name>RS19_SYNAS</name>
<gene>
    <name evidence="1" type="primary">rpsS</name>
    <name type="ordered locus">SYNAS_03050</name>
    <name type="ORF">SYN_00989</name>
</gene>
<accession>Q2LQ97</accession>
<comment type="function">
    <text evidence="1">Protein S19 forms a complex with S13 that binds strongly to the 16S ribosomal RNA.</text>
</comment>
<comment type="similarity">
    <text evidence="1">Belongs to the universal ribosomal protein uS19 family.</text>
</comment>
<dbReference type="EMBL" id="CP000252">
    <property type="protein sequence ID" value="ABC76184.1"/>
    <property type="molecule type" value="Genomic_DNA"/>
</dbReference>
<dbReference type="RefSeq" id="WP_011416218.1">
    <property type="nucleotide sequence ID" value="NC_007759.1"/>
</dbReference>
<dbReference type="SMR" id="Q2LQ97"/>
<dbReference type="FunCoup" id="Q2LQ97">
    <property type="interactions" value="483"/>
</dbReference>
<dbReference type="STRING" id="56780.SYN_00989"/>
<dbReference type="KEGG" id="sat:SYN_00989"/>
<dbReference type="eggNOG" id="COG0185">
    <property type="taxonomic scope" value="Bacteria"/>
</dbReference>
<dbReference type="HOGENOM" id="CLU_144911_0_1_7"/>
<dbReference type="InParanoid" id="Q2LQ97"/>
<dbReference type="OrthoDB" id="9797833at2"/>
<dbReference type="Proteomes" id="UP000001933">
    <property type="component" value="Chromosome"/>
</dbReference>
<dbReference type="GO" id="GO:0005737">
    <property type="term" value="C:cytoplasm"/>
    <property type="evidence" value="ECO:0007669"/>
    <property type="project" value="UniProtKB-ARBA"/>
</dbReference>
<dbReference type="GO" id="GO:0015935">
    <property type="term" value="C:small ribosomal subunit"/>
    <property type="evidence" value="ECO:0007669"/>
    <property type="project" value="InterPro"/>
</dbReference>
<dbReference type="GO" id="GO:0019843">
    <property type="term" value="F:rRNA binding"/>
    <property type="evidence" value="ECO:0007669"/>
    <property type="project" value="UniProtKB-UniRule"/>
</dbReference>
<dbReference type="GO" id="GO:0003735">
    <property type="term" value="F:structural constituent of ribosome"/>
    <property type="evidence" value="ECO:0007669"/>
    <property type="project" value="InterPro"/>
</dbReference>
<dbReference type="GO" id="GO:0000028">
    <property type="term" value="P:ribosomal small subunit assembly"/>
    <property type="evidence" value="ECO:0007669"/>
    <property type="project" value="TreeGrafter"/>
</dbReference>
<dbReference type="GO" id="GO:0006412">
    <property type="term" value="P:translation"/>
    <property type="evidence" value="ECO:0007669"/>
    <property type="project" value="UniProtKB-UniRule"/>
</dbReference>
<dbReference type="FunFam" id="3.30.860.10:FF:000001">
    <property type="entry name" value="30S ribosomal protein S19"/>
    <property type="match status" value="1"/>
</dbReference>
<dbReference type="Gene3D" id="3.30.860.10">
    <property type="entry name" value="30s Ribosomal Protein S19, Chain A"/>
    <property type="match status" value="1"/>
</dbReference>
<dbReference type="HAMAP" id="MF_00531">
    <property type="entry name" value="Ribosomal_uS19"/>
    <property type="match status" value="1"/>
</dbReference>
<dbReference type="InterPro" id="IPR002222">
    <property type="entry name" value="Ribosomal_uS19"/>
</dbReference>
<dbReference type="InterPro" id="IPR005732">
    <property type="entry name" value="Ribosomal_uS19_bac-type"/>
</dbReference>
<dbReference type="InterPro" id="IPR020934">
    <property type="entry name" value="Ribosomal_uS19_CS"/>
</dbReference>
<dbReference type="InterPro" id="IPR023575">
    <property type="entry name" value="Ribosomal_uS19_SF"/>
</dbReference>
<dbReference type="NCBIfam" id="TIGR01050">
    <property type="entry name" value="rpsS_bact"/>
    <property type="match status" value="1"/>
</dbReference>
<dbReference type="PANTHER" id="PTHR11880">
    <property type="entry name" value="RIBOSOMAL PROTEIN S19P FAMILY MEMBER"/>
    <property type="match status" value="1"/>
</dbReference>
<dbReference type="PANTHER" id="PTHR11880:SF8">
    <property type="entry name" value="SMALL RIBOSOMAL SUBUNIT PROTEIN US19M"/>
    <property type="match status" value="1"/>
</dbReference>
<dbReference type="Pfam" id="PF00203">
    <property type="entry name" value="Ribosomal_S19"/>
    <property type="match status" value="1"/>
</dbReference>
<dbReference type="PIRSF" id="PIRSF002144">
    <property type="entry name" value="Ribosomal_S19"/>
    <property type="match status" value="1"/>
</dbReference>
<dbReference type="PRINTS" id="PR00975">
    <property type="entry name" value="RIBOSOMALS19"/>
</dbReference>
<dbReference type="SUPFAM" id="SSF54570">
    <property type="entry name" value="Ribosomal protein S19"/>
    <property type="match status" value="1"/>
</dbReference>
<dbReference type="PROSITE" id="PS00323">
    <property type="entry name" value="RIBOSOMAL_S19"/>
    <property type="match status" value="1"/>
</dbReference>
<protein>
    <recommendedName>
        <fullName evidence="1">Small ribosomal subunit protein uS19</fullName>
    </recommendedName>
    <alternativeName>
        <fullName evidence="2">30S ribosomal protein S19</fullName>
    </alternativeName>
</protein>